<gene>
    <name evidence="1" type="primary">trpD</name>
    <name type="ordered locus">RHA1_ro01128</name>
</gene>
<sequence length="362" mass="37119">MQSPTAQGTNDGVRPARTWPSVLGTLTDGRDLSVDEAKWAMDEIMSDNATSAQIAAFGVALKMKGETPEELRGLADSMLGHARKVPVDDDVVDIVGTGGDRSNTVNISTMASLVVAASGIRVVKHGNRAASSKSGGADVLEALGVKINLGPDEVARCVREVGIGFCFAPVFHPALRFAGAPRKEIGIPTVFNVLGPLTNPARPRAGLIGCAFPGLISVVAGVLAQRGNSALVVRGDDGLDELTTSTTSTVHIVADGAVTTRQLDPRDIGIARVSLDELRGGDAEVNAAVARRLFAGETGPVRDAVLLNAAAAIAAFRGLGGRTLEDALSDGLSTAAQSIDSGAAATLLARWAELTSGLATSK</sequence>
<proteinExistence type="inferred from homology"/>
<reference key="1">
    <citation type="journal article" date="2006" name="Proc. Natl. Acad. Sci. U.S.A.">
        <title>The complete genome of Rhodococcus sp. RHA1 provides insights into a catabolic powerhouse.</title>
        <authorList>
            <person name="McLeod M.P."/>
            <person name="Warren R.L."/>
            <person name="Hsiao W.W.L."/>
            <person name="Araki N."/>
            <person name="Myhre M."/>
            <person name="Fernandes C."/>
            <person name="Miyazawa D."/>
            <person name="Wong W."/>
            <person name="Lillquist A.L."/>
            <person name="Wang D."/>
            <person name="Dosanjh M."/>
            <person name="Hara H."/>
            <person name="Petrescu A."/>
            <person name="Morin R.D."/>
            <person name="Yang G."/>
            <person name="Stott J.M."/>
            <person name="Schein J.E."/>
            <person name="Shin H."/>
            <person name="Smailus D."/>
            <person name="Siddiqui A.S."/>
            <person name="Marra M.A."/>
            <person name="Jones S.J.M."/>
            <person name="Holt R."/>
            <person name="Brinkman F.S.L."/>
            <person name="Miyauchi K."/>
            <person name="Fukuda M."/>
            <person name="Davies J.E."/>
            <person name="Mohn W.W."/>
            <person name="Eltis L.D."/>
        </authorList>
    </citation>
    <scope>NUCLEOTIDE SEQUENCE [LARGE SCALE GENOMIC DNA]</scope>
    <source>
        <strain>RHA1</strain>
    </source>
</reference>
<protein>
    <recommendedName>
        <fullName evidence="1">Anthranilate phosphoribosyltransferase</fullName>
        <ecNumber evidence="1">2.4.2.18</ecNumber>
    </recommendedName>
</protein>
<comment type="function">
    <text evidence="1">Catalyzes the transfer of the phosphoribosyl group of 5-phosphorylribose-1-pyrophosphate (PRPP) to anthranilate to yield N-(5'-phosphoribosyl)-anthranilate (PRA).</text>
</comment>
<comment type="catalytic activity">
    <reaction evidence="1">
        <text>N-(5-phospho-beta-D-ribosyl)anthranilate + diphosphate = 5-phospho-alpha-D-ribose 1-diphosphate + anthranilate</text>
        <dbReference type="Rhea" id="RHEA:11768"/>
        <dbReference type="ChEBI" id="CHEBI:16567"/>
        <dbReference type="ChEBI" id="CHEBI:18277"/>
        <dbReference type="ChEBI" id="CHEBI:33019"/>
        <dbReference type="ChEBI" id="CHEBI:58017"/>
        <dbReference type="EC" id="2.4.2.18"/>
    </reaction>
</comment>
<comment type="cofactor">
    <cofactor evidence="1">
        <name>Mg(2+)</name>
        <dbReference type="ChEBI" id="CHEBI:18420"/>
    </cofactor>
    <text evidence="1">Binds 2 magnesium ions per monomer.</text>
</comment>
<comment type="pathway">
    <text evidence="1">Amino-acid biosynthesis; L-tryptophan biosynthesis; L-tryptophan from chorismate: step 2/5.</text>
</comment>
<comment type="subunit">
    <text evidence="1">Homodimer.</text>
</comment>
<comment type="similarity">
    <text evidence="1">Belongs to the anthranilate phosphoribosyltransferase family.</text>
</comment>
<organism>
    <name type="scientific">Rhodococcus jostii (strain RHA1)</name>
    <dbReference type="NCBI Taxonomy" id="101510"/>
    <lineage>
        <taxon>Bacteria</taxon>
        <taxon>Bacillati</taxon>
        <taxon>Actinomycetota</taxon>
        <taxon>Actinomycetes</taxon>
        <taxon>Mycobacteriales</taxon>
        <taxon>Nocardiaceae</taxon>
        <taxon>Rhodococcus</taxon>
    </lineage>
</organism>
<name>TRPD_RHOJR</name>
<accession>Q0SHN1</accession>
<dbReference type="EC" id="2.4.2.18" evidence="1"/>
<dbReference type="EMBL" id="CP000431">
    <property type="protein sequence ID" value="ABG92955.1"/>
    <property type="molecule type" value="Genomic_DNA"/>
</dbReference>
<dbReference type="RefSeq" id="WP_011594250.1">
    <property type="nucleotide sequence ID" value="NC_008268.1"/>
</dbReference>
<dbReference type="SMR" id="Q0SHN1"/>
<dbReference type="KEGG" id="rha:RHA1_ro01128"/>
<dbReference type="PATRIC" id="fig|101510.16.peg.1155"/>
<dbReference type="eggNOG" id="COG0547">
    <property type="taxonomic scope" value="Bacteria"/>
</dbReference>
<dbReference type="HOGENOM" id="CLU_034315_4_1_11"/>
<dbReference type="OrthoDB" id="9806430at2"/>
<dbReference type="UniPathway" id="UPA00035">
    <property type="reaction ID" value="UER00041"/>
</dbReference>
<dbReference type="Proteomes" id="UP000008710">
    <property type="component" value="Chromosome"/>
</dbReference>
<dbReference type="GO" id="GO:0005829">
    <property type="term" value="C:cytosol"/>
    <property type="evidence" value="ECO:0007669"/>
    <property type="project" value="TreeGrafter"/>
</dbReference>
<dbReference type="GO" id="GO:0004048">
    <property type="term" value="F:anthranilate phosphoribosyltransferase activity"/>
    <property type="evidence" value="ECO:0007669"/>
    <property type="project" value="UniProtKB-UniRule"/>
</dbReference>
<dbReference type="GO" id="GO:0000287">
    <property type="term" value="F:magnesium ion binding"/>
    <property type="evidence" value="ECO:0007669"/>
    <property type="project" value="UniProtKB-UniRule"/>
</dbReference>
<dbReference type="GO" id="GO:0000162">
    <property type="term" value="P:L-tryptophan biosynthetic process"/>
    <property type="evidence" value="ECO:0007669"/>
    <property type="project" value="UniProtKB-UniRule"/>
</dbReference>
<dbReference type="FunFam" id="3.40.1030.10:FF:000002">
    <property type="entry name" value="Anthranilate phosphoribosyltransferase"/>
    <property type="match status" value="1"/>
</dbReference>
<dbReference type="Gene3D" id="3.40.1030.10">
    <property type="entry name" value="Nucleoside phosphorylase/phosphoribosyltransferase catalytic domain"/>
    <property type="match status" value="1"/>
</dbReference>
<dbReference type="Gene3D" id="1.20.970.10">
    <property type="entry name" value="Transferase, Pyrimidine Nucleoside Phosphorylase, Chain C"/>
    <property type="match status" value="1"/>
</dbReference>
<dbReference type="HAMAP" id="MF_00211">
    <property type="entry name" value="TrpD"/>
    <property type="match status" value="1"/>
</dbReference>
<dbReference type="InterPro" id="IPR005940">
    <property type="entry name" value="Anthranilate_Pribosyl_Tfrase"/>
</dbReference>
<dbReference type="InterPro" id="IPR000312">
    <property type="entry name" value="Glycosyl_Trfase_fam3"/>
</dbReference>
<dbReference type="InterPro" id="IPR017459">
    <property type="entry name" value="Glycosyl_Trfase_fam3_N_dom"/>
</dbReference>
<dbReference type="InterPro" id="IPR036320">
    <property type="entry name" value="Glycosyl_Trfase_fam3_N_dom_sf"/>
</dbReference>
<dbReference type="InterPro" id="IPR035902">
    <property type="entry name" value="Nuc_phospho_transferase"/>
</dbReference>
<dbReference type="NCBIfam" id="TIGR01245">
    <property type="entry name" value="trpD"/>
    <property type="match status" value="1"/>
</dbReference>
<dbReference type="PANTHER" id="PTHR43285">
    <property type="entry name" value="ANTHRANILATE PHOSPHORIBOSYLTRANSFERASE"/>
    <property type="match status" value="1"/>
</dbReference>
<dbReference type="PANTHER" id="PTHR43285:SF2">
    <property type="entry name" value="ANTHRANILATE PHOSPHORIBOSYLTRANSFERASE"/>
    <property type="match status" value="1"/>
</dbReference>
<dbReference type="Pfam" id="PF02885">
    <property type="entry name" value="Glycos_trans_3N"/>
    <property type="match status" value="1"/>
</dbReference>
<dbReference type="Pfam" id="PF00591">
    <property type="entry name" value="Glycos_transf_3"/>
    <property type="match status" value="1"/>
</dbReference>
<dbReference type="SUPFAM" id="SSF52418">
    <property type="entry name" value="Nucleoside phosphorylase/phosphoribosyltransferase catalytic domain"/>
    <property type="match status" value="1"/>
</dbReference>
<dbReference type="SUPFAM" id="SSF47648">
    <property type="entry name" value="Nucleoside phosphorylase/phosphoribosyltransferase N-terminal domain"/>
    <property type="match status" value="1"/>
</dbReference>
<evidence type="ECO:0000255" key="1">
    <source>
        <dbReference type="HAMAP-Rule" id="MF_00211"/>
    </source>
</evidence>
<feature type="chain" id="PRO_0000325454" description="Anthranilate phosphoribosyltransferase">
    <location>
        <begin position="1"/>
        <end position="362"/>
    </location>
</feature>
<feature type="binding site" evidence="1">
    <location>
        <position position="96"/>
    </location>
    <ligand>
        <name>5-phospho-alpha-D-ribose 1-diphosphate</name>
        <dbReference type="ChEBI" id="CHEBI:58017"/>
    </ligand>
</feature>
<feature type="binding site" evidence="1">
    <location>
        <position position="96"/>
    </location>
    <ligand>
        <name>anthranilate</name>
        <dbReference type="ChEBI" id="CHEBI:16567"/>
        <label>1</label>
    </ligand>
</feature>
<feature type="binding site" evidence="1">
    <location>
        <begin position="99"/>
        <end position="100"/>
    </location>
    <ligand>
        <name>5-phospho-alpha-D-ribose 1-diphosphate</name>
        <dbReference type="ChEBI" id="CHEBI:58017"/>
    </ligand>
</feature>
<feature type="binding site" evidence="1">
    <location>
        <position position="104"/>
    </location>
    <ligand>
        <name>5-phospho-alpha-D-ribose 1-diphosphate</name>
        <dbReference type="ChEBI" id="CHEBI:58017"/>
    </ligand>
</feature>
<feature type="binding site" evidence="1">
    <location>
        <begin position="106"/>
        <end position="109"/>
    </location>
    <ligand>
        <name>5-phospho-alpha-D-ribose 1-diphosphate</name>
        <dbReference type="ChEBI" id="CHEBI:58017"/>
    </ligand>
</feature>
<feature type="binding site" evidence="1">
    <location>
        <position position="108"/>
    </location>
    <ligand>
        <name>Mg(2+)</name>
        <dbReference type="ChEBI" id="CHEBI:18420"/>
        <label>1</label>
    </ligand>
</feature>
<feature type="binding site" evidence="1">
    <location>
        <begin position="124"/>
        <end position="132"/>
    </location>
    <ligand>
        <name>5-phospho-alpha-D-ribose 1-diphosphate</name>
        <dbReference type="ChEBI" id="CHEBI:58017"/>
    </ligand>
</feature>
<feature type="binding site" evidence="1">
    <location>
        <position position="127"/>
    </location>
    <ligand>
        <name>anthranilate</name>
        <dbReference type="ChEBI" id="CHEBI:16567"/>
        <label>1</label>
    </ligand>
</feature>
<feature type="binding site" evidence="1">
    <location>
        <position position="136"/>
    </location>
    <ligand>
        <name>5-phospho-alpha-D-ribose 1-diphosphate</name>
        <dbReference type="ChEBI" id="CHEBI:58017"/>
    </ligand>
</feature>
<feature type="binding site" evidence="1">
    <location>
        <position position="182"/>
    </location>
    <ligand>
        <name>anthranilate</name>
        <dbReference type="ChEBI" id="CHEBI:16567"/>
        <label>2</label>
    </ligand>
</feature>
<feature type="binding site" evidence="1">
    <location>
        <position position="240"/>
    </location>
    <ligand>
        <name>Mg(2+)</name>
        <dbReference type="ChEBI" id="CHEBI:18420"/>
        <label>2</label>
    </ligand>
</feature>
<feature type="binding site" evidence="1">
    <location>
        <position position="241"/>
    </location>
    <ligand>
        <name>Mg(2+)</name>
        <dbReference type="ChEBI" id="CHEBI:18420"/>
        <label>1</label>
    </ligand>
</feature>
<feature type="binding site" evidence="1">
    <location>
        <position position="241"/>
    </location>
    <ligand>
        <name>Mg(2+)</name>
        <dbReference type="ChEBI" id="CHEBI:18420"/>
        <label>2</label>
    </ligand>
</feature>
<keyword id="KW-0028">Amino-acid biosynthesis</keyword>
<keyword id="KW-0057">Aromatic amino acid biosynthesis</keyword>
<keyword id="KW-0328">Glycosyltransferase</keyword>
<keyword id="KW-0460">Magnesium</keyword>
<keyword id="KW-0479">Metal-binding</keyword>
<keyword id="KW-0808">Transferase</keyword>
<keyword id="KW-0822">Tryptophan biosynthesis</keyword>